<proteinExistence type="evidence at protein level"/>
<keyword id="KW-0903">Direct protein sequencing</keyword>
<sequence>PGGGVSGALSSLVQSLVR</sequence>
<organism>
    <name type="scientific">Nautilus macromphalus</name>
    <name type="common">Bellybutton nautilus</name>
    <dbReference type="NCBI Taxonomy" id="34576"/>
    <lineage>
        <taxon>Eukaryota</taxon>
        <taxon>Metazoa</taxon>
        <taxon>Spiralia</taxon>
        <taxon>Lophotrochozoa</taxon>
        <taxon>Mollusca</taxon>
        <taxon>Cephalopoda</taxon>
        <taxon>Nautiloidea</taxon>
        <taxon>Nautilida</taxon>
        <taxon>Nautilidae</taxon>
        <taxon>Nautilus</taxon>
    </lineage>
</organism>
<protein>
    <recommendedName>
        <fullName evidence="2">Uncharacterized protein IMPP16</fullName>
    </recommendedName>
</protein>
<accession>P85365</accession>
<name>IMP16_NAUMA</name>
<comment type="tissue specificity">
    <text evidence="1">Nacreous layer of shell.</text>
</comment>
<feature type="chain" id="PRO_0000371477" description="Uncharacterized protein IMPP16">
    <location>
        <begin position="1" status="less than"/>
        <end position="18" status="greater than"/>
    </location>
</feature>
<feature type="unsure residue" description="L or I" evidence="1">
    <location>
        <position position="9"/>
    </location>
</feature>
<feature type="unsure residue" description="L or I" evidence="1">
    <location>
        <position position="12"/>
    </location>
</feature>
<feature type="unsure residue" description="L or I" evidence="1">
    <location>
        <position position="16"/>
    </location>
</feature>
<feature type="non-terminal residue" evidence="2">
    <location>
        <position position="1"/>
    </location>
</feature>
<feature type="non-terminal residue" evidence="2">
    <location>
        <position position="18"/>
    </location>
</feature>
<reference key="1">
    <citation type="journal article" date="2009" name="ChemBioChem">
        <title>Evolution of nacre: biochemistry and 'shellomics' of the shell organic matrix of the cephalopod Nautilus macromphalus.</title>
        <authorList>
            <person name="Marie B."/>
            <person name="Marin F."/>
            <person name="Marie A."/>
            <person name="Bedouet L."/>
            <person name="Dubost L."/>
            <person name="Alcaraz G."/>
            <person name="Milet C."/>
            <person name="Luquet G."/>
        </authorList>
    </citation>
    <scope>PROTEIN SEQUENCE</scope>
    <scope>TISSUE SPECIFICITY</scope>
    <source>
        <tissue>Shell</tissue>
    </source>
</reference>
<evidence type="ECO:0000269" key="1">
    <source>
    </source>
</evidence>
<evidence type="ECO:0000303" key="2">
    <source>
    </source>
</evidence>